<comment type="function">
    <text evidence="1">NAD-binding protein involved in the addition of a carboxymethylaminomethyl (cmnm) group at the wobble position (U34) of certain tRNAs, forming tRNA-cmnm(5)s(2)U34.</text>
</comment>
<comment type="cofactor">
    <cofactor evidence="1">
        <name>FAD</name>
        <dbReference type="ChEBI" id="CHEBI:57692"/>
    </cofactor>
</comment>
<comment type="subunit">
    <text evidence="1">Homodimer. Heterotetramer of two MnmE and two MnmG subunits.</text>
</comment>
<comment type="subcellular location">
    <subcellularLocation>
        <location evidence="1">Cytoplasm</location>
    </subcellularLocation>
</comment>
<comment type="similarity">
    <text evidence="1">Belongs to the MnmG family.</text>
</comment>
<dbReference type="EMBL" id="AE008691">
    <property type="protein sequence ID" value="AAM25899.1"/>
    <property type="molecule type" value="Genomic_DNA"/>
</dbReference>
<dbReference type="RefSeq" id="WP_009610971.1">
    <property type="nucleotide sequence ID" value="NC_003869.1"/>
</dbReference>
<dbReference type="SMR" id="Q8R6K9"/>
<dbReference type="STRING" id="273068.TTE2795"/>
<dbReference type="KEGG" id="tte:TTE2795"/>
<dbReference type="eggNOG" id="COG0445">
    <property type="taxonomic scope" value="Bacteria"/>
</dbReference>
<dbReference type="HOGENOM" id="CLU_007831_2_2_9"/>
<dbReference type="OrthoDB" id="9815560at2"/>
<dbReference type="Proteomes" id="UP000000555">
    <property type="component" value="Chromosome"/>
</dbReference>
<dbReference type="GO" id="GO:0005829">
    <property type="term" value="C:cytosol"/>
    <property type="evidence" value="ECO:0007669"/>
    <property type="project" value="TreeGrafter"/>
</dbReference>
<dbReference type="GO" id="GO:0050660">
    <property type="term" value="F:flavin adenine dinucleotide binding"/>
    <property type="evidence" value="ECO:0007669"/>
    <property type="project" value="UniProtKB-UniRule"/>
</dbReference>
<dbReference type="GO" id="GO:0030488">
    <property type="term" value="P:tRNA methylation"/>
    <property type="evidence" value="ECO:0007669"/>
    <property type="project" value="TreeGrafter"/>
</dbReference>
<dbReference type="GO" id="GO:0002098">
    <property type="term" value="P:tRNA wobble uridine modification"/>
    <property type="evidence" value="ECO:0007669"/>
    <property type="project" value="InterPro"/>
</dbReference>
<dbReference type="FunFam" id="1.10.10.1800:FF:000001">
    <property type="entry name" value="tRNA uridine 5-carboxymethylaminomethyl modification enzyme MnmG"/>
    <property type="match status" value="1"/>
</dbReference>
<dbReference type="FunFam" id="1.10.150.570:FF:000001">
    <property type="entry name" value="tRNA uridine 5-carboxymethylaminomethyl modification enzyme MnmG"/>
    <property type="match status" value="1"/>
</dbReference>
<dbReference type="FunFam" id="3.50.50.60:FF:000002">
    <property type="entry name" value="tRNA uridine 5-carboxymethylaminomethyl modification enzyme MnmG"/>
    <property type="match status" value="1"/>
</dbReference>
<dbReference type="Gene3D" id="3.50.50.60">
    <property type="entry name" value="FAD/NAD(P)-binding domain"/>
    <property type="match status" value="2"/>
</dbReference>
<dbReference type="Gene3D" id="1.10.150.570">
    <property type="entry name" value="GidA associated domain, C-terminal subdomain"/>
    <property type="match status" value="1"/>
</dbReference>
<dbReference type="Gene3D" id="1.10.10.1800">
    <property type="entry name" value="tRNA uridine 5-carboxymethylaminomethyl modification enzyme MnmG/GidA"/>
    <property type="match status" value="1"/>
</dbReference>
<dbReference type="HAMAP" id="MF_00129">
    <property type="entry name" value="MnmG_GidA"/>
    <property type="match status" value="1"/>
</dbReference>
<dbReference type="InterPro" id="IPR036188">
    <property type="entry name" value="FAD/NAD-bd_sf"/>
</dbReference>
<dbReference type="InterPro" id="IPR049312">
    <property type="entry name" value="GIDA_C_N"/>
</dbReference>
<dbReference type="InterPro" id="IPR004416">
    <property type="entry name" value="MnmG"/>
</dbReference>
<dbReference type="InterPro" id="IPR002218">
    <property type="entry name" value="MnmG-rel"/>
</dbReference>
<dbReference type="InterPro" id="IPR020595">
    <property type="entry name" value="MnmG-rel_CS"/>
</dbReference>
<dbReference type="InterPro" id="IPR026904">
    <property type="entry name" value="MnmG_C"/>
</dbReference>
<dbReference type="InterPro" id="IPR047001">
    <property type="entry name" value="MnmG_C_subdom"/>
</dbReference>
<dbReference type="InterPro" id="IPR044920">
    <property type="entry name" value="MnmG_C_subdom_sf"/>
</dbReference>
<dbReference type="InterPro" id="IPR040131">
    <property type="entry name" value="MnmG_N"/>
</dbReference>
<dbReference type="NCBIfam" id="TIGR00136">
    <property type="entry name" value="mnmG_gidA"/>
    <property type="match status" value="1"/>
</dbReference>
<dbReference type="PANTHER" id="PTHR11806">
    <property type="entry name" value="GLUCOSE INHIBITED DIVISION PROTEIN A"/>
    <property type="match status" value="1"/>
</dbReference>
<dbReference type="PANTHER" id="PTHR11806:SF0">
    <property type="entry name" value="PROTEIN MTO1 HOMOLOG, MITOCHONDRIAL"/>
    <property type="match status" value="1"/>
</dbReference>
<dbReference type="Pfam" id="PF01134">
    <property type="entry name" value="GIDA"/>
    <property type="match status" value="1"/>
</dbReference>
<dbReference type="Pfam" id="PF21680">
    <property type="entry name" value="GIDA_C_1st"/>
    <property type="match status" value="1"/>
</dbReference>
<dbReference type="Pfam" id="PF13932">
    <property type="entry name" value="SAM_GIDA_C"/>
    <property type="match status" value="1"/>
</dbReference>
<dbReference type="SMART" id="SM01228">
    <property type="entry name" value="GIDA_assoc_3"/>
    <property type="match status" value="1"/>
</dbReference>
<dbReference type="SUPFAM" id="SSF51905">
    <property type="entry name" value="FAD/NAD(P)-binding domain"/>
    <property type="match status" value="1"/>
</dbReference>
<dbReference type="PROSITE" id="PS01280">
    <property type="entry name" value="GIDA_1"/>
    <property type="match status" value="1"/>
</dbReference>
<dbReference type="PROSITE" id="PS01281">
    <property type="entry name" value="GIDA_2"/>
    <property type="match status" value="1"/>
</dbReference>
<accession>Q8R6K9</accession>
<protein>
    <recommendedName>
        <fullName evidence="1">tRNA uridine 5-carboxymethylaminomethyl modification enzyme MnmG 2</fullName>
    </recommendedName>
    <alternativeName>
        <fullName evidence="1">Glucose-inhibited division protein A 2</fullName>
    </alternativeName>
</protein>
<proteinExistence type="inferred from homology"/>
<feature type="chain" id="PRO_0000117201" description="tRNA uridine 5-carboxymethylaminomethyl modification enzyme MnmG 2">
    <location>
        <begin position="1"/>
        <end position="633"/>
    </location>
</feature>
<feature type="binding site" evidence="1">
    <location>
        <begin position="14"/>
        <end position="19"/>
    </location>
    <ligand>
        <name>FAD</name>
        <dbReference type="ChEBI" id="CHEBI:57692"/>
    </ligand>
</feature>
<feature type="binding site" evidence="1">
    <location>
        <begin position="273"/>
        <end position="287"/>
    </location>
    <ligand>
        <name>NAD(+)</name>
        <dbReference type="ChEBI" id="CHEBI:57540"/>
    </ligand>
</feature>
<evidence type="ECO:0000255" key="1">
    <source>
        <dbReference type="HAMAP-Rule" id="MF_00129"/>
    </source>
</evidence>
<keyword id="KW-0963">Cytoplasm</keyword>
<keyword id="KW-0274">FAD</keyword>
<keyword id="KW-0285">Flavoprotein</keyword>
<keyword id="KW-0520">NAD</keyword>
<keyword id="KW-1185">Reference proteome</keyword>
<keyword id="KW-0819">tRNA processing</keyword>
<gene>
    <name evidence="1" type="primary">mnmG2</name>
    <name evidence="1" type="synonym">gidA2</name>
    <name type="ordered locus">TTE2795</name>
</gene>
<reference key="1">
    <citation type="journal article" date="2002" name="Genome Res.">
        <title>A complete sequence of the T. tengcongensis genome.</title>
        <authorList>
            <person name="Bao Q."/>
            <person name="Tian Y."/>
            <person name="Li W."/>
            <person name="Xu Z."/>
            <person name="Xuan Z."/>
            <person name="Hu S."/>
            <person name="Dong W."/>
            <person name="Yang J."/>
            <person name="Chen Y."/>
            <person name="Xue Y."/>
            <person name="Xu Y."/>
            <person name="Lai X."/>
            <person name="Huang L."/>
            <person name="Dong X."/>
            <person name="Ma Y."/>
            <person name="Ling L."/>
            <person name="Tan H."/>
            <person name="Chen R."/>
            <person name="Wang J."/>
            <person name="Yu J."/>
            <person name="Yang H."/>
        </authorList>
    </citation>
    <scope>NUCLEOTIDE SEQUENCE [LARGE SCALE GENOMIC DNA]</scope>
    <source>
        <strain>DSM 15242 / JCM 11007 / NBRC 100824 / MB4</strain>
    </source>
</reference>
<name>MNMG2_CALS4</name>
<organism>
    <name type="scientific">Caldanaerobacter subterraneus subsp. tengcongensis (strain DSM 15242 / JCM 11007 / NBRC 100824 / MB4)</name>
    <name type="common">Thermoanaerobacter tengcongensis</name>
    <dbReference type="NCBI Taxonomy" id="273068"/>
    <lineage>
        <taxon>Bacteria</taxon>
        <taxon>Bacillati</taxon>
        <taxon>Bacillota</taxon>
        <taxon>Clostridia</taxon>
        <taxon>Thermoanaerobacterales</taxon>
        <taxon>Thermoanaerobacteraceae</taxon>
        <taxon>Caldanaerobacter</taxon>
    </lineage>
</organism>
<sequence>MRYIAGEYDVCVVGLGHAGSEAALASARLGLATVGFATNLDAIALMACNPSIGGPAKAQLVREIDALGGEMAVNTDKSLLQMRTLNTSKGPAVRSLRAQVDKKLYQANMKHTLERQKNLDIKQAEIVDILVENNKVVGVVTKLGAIYKCKACIITTGTFLRGRVIIGEVGFESGPSGLFPAKELSEAIKRLGFKMMRFNTSTPPRVDKRTVDFSKMIMQPGDEVITPFSFMHDKIEIEQIPCWLTYTNEKTHKIIRDNIHRAPLYTGEVEGVGVRYCPSIEDKVMKFPHRDRHQIFVEPEGRDTYEMYIQGLFSSFPEDLQMEILSTIPGLENAKIMRPAYAIEYDCIDPTQLKATLETKLVEGLYFAGQVNGTSGYEEAAAQGLMAGINAALKILGKPPLILDRSQAYIGILIDDLVTKGTNEPYRMLTSRAEYRLILRQDNADFRLTEIGKEIGLVTEERYEKFLRKKIQLEKEMMRLPTVMVRPTEEVNNFLISRGSTPLVSGVDLYTLLKRPEIDYKSTKFLDPTRPDDILDSVAEQIDINIKYEGYILKQLRQVEQFKAMENKKIPEDIDYYQVHGLSNEAKEKLSKIRPTSVGQASRISGVSPADISVLLIYLQQMRRKRSDEAKIN</sequence>